<evidence type="ECO:0000255" key="1">
    <source>
        <dbReference type="HAMAP-Rule" id="MF_00005"/>
    </source>
</evidence>
<dbReference type="EC" id="6.3.4.5" evidence="1"/>
<dbReference type="EMBL" id="AE009439">
    <property type="protein sequence ID" value="AAM02155.1"/>
    <property type="molecule type" value="Genomic_DNA"/>
</dbReference>
<dbReference type="RefSeq" id="WP_011019310.1">
    <property type="nucleotide sequence ID" value="NC_003551.1"/>
</dbReference>
<dbReference type="SMR" id="Q8TWU0"/>
<dbReference type="FunCoup" id="Q8TWU0">
    <property type="interactions" value="186"/>
</dbReference>
<dbReference type="STRING" id="190192.MK0942"/>
<dbReference type="PaxDb" id="190192-MK0942"/>
<dbReference type="EnsemblBacteria" id="AAM02155">
    <property type="protein sequence ID" value="AAM02155"/>
    <property type="gene ID" value="MK0942"/>
</dbReference>
<dbReference type="GeneID" id="1477043"/>
<dbReference type="KEGG" id="mka:MK0942"/>
<dbReference type="PATRIC" id="fig|190192.8.peg.987"/>
<dbReference type="HOGENOM" id="CLU_032784_4_0_2"/>
<dbReference type="InParanoid" id="Q8TWU0"/>
<dbReference type="OrthoDB" id="5877at2157"/>
<dbReference type="UniPathway" id="UPA00068">
    <property type="reaction ID" value="UER00113"/>
</dbReference>
<dbReference type="Proteomes" id="UP000001826">
    <property type="component" value="Chromosome"/>
</dbReference>
<dbReference type="GO" id="GO:0005737">
    <property type="term" value="C:cytoplasm"/>
    <property type="evidence" value="ECO:0007669"/>
    <property type="project" value="UniProtKB-SubCell"/>
</dbReference>
<dbReference type="GO" id="GO:0004055">
    <property type="term" value="F:argininosuccinate synthase activity"/>
    <property type="evidence" value="ECO:0007669"/>
    <property type="project" value="UniProtKB-UniRule"/>
</dbReference>
<dbReference type="GO" id="GO:0005524">
    <property type="term" value="F:ATP binding"/>
    <property type="evidence" value="ECO:0007669"/>
    <property type="project" value="UniProtKB-UniRule"/>
</dbReference>
<dbReference type="GO" id="GO:0000053">
    <property type="term" value="P:argininosuccinate metabolic process"/>
    <property type="evidence" value="ECO:0007669"/>
    <property type="project" value="TreeGrafter"/>
</dbReference>
<dbReference type="GO" id="GO:0006526">
    <property type="term" value="P:L-arginine biosynthetic process"/>
    <property type="evidence" value="ECO:0007669"/>
    <property type="project" value="UniProtKB-UniRule"/>
</dbReference>
<dbReference type="GO" id="GO:0000050">
    <property type="term" value="P:urea cycle"/>
    <property type="evidence" value="ECO:0007669"/>
    <property type="project" value="TreeGrafter"/>
</dbReference>
<dbReference type="CDD" id="cd01999">
    <property type="entry name" value="ASS"/>
    <property type="match status" value="1"/>
</dbReference>
<dbReference type="FunFam" id="3.40.50.620:FF:000019">
    <property type="entry name" value="Argininosuccinate synthase"/>
    <property type="match status" value="1"/>
</dbReference>
<dbReference type="FunFam" id="3.90.1260.10:FF:000007">
    <property type="entry name" value="Argininosuccinate synthase"/>
    <property type="match status" value="1"/>
</dbReference>
<dbReference type="Gene3D" id="3.90.1260.10">
    <property type="entry name" value="Argininosuccinate synthetase, chain A, domain 2"/>
    <property type="match status" value="1"/>
</dbReference>
<dbReference type="Gene3D" id="3.40.50.620">
    <property type="entry name" value="HUPs"/>
    <property type="match status" value="1"/>
</dbReference>
<dbReference type="HAMAP" id="MF_00005">
    <property type="entry name" value="Arg_succ_synth_type1"/>
    <property type="match status" value="1"/>
</dbReference>
<dbReference type="InterPro" id="IPR048268">
    <property type="entry name" value="Arginosuc_syn_C"/>
</dbReference>
<dbReference type="InterPro" id="IPR048267">
    <property type="entry name" value="Arginosuc_syn_N"/>
</dbReference>
<dbReference type="InterPro" id="IPR001518">
    <property type="entry name" value="Arginosuc_synth"/>
</dbReference>
<dbReference type="InterPro" id="IPR018223">
    <property type="entry name" value="Arginosuc_synth_CS"/>
</dbReference>
<dbReference type="InterPro" id="IPR023434">
    <property type="entry name" value="Arginosuc_synth_type_1_subfam"/>
</dbReference>
<dbReference type="InterPro" id="IPR024074">
    <property type="entry name" value="AS_cat/multimer_dom_body"/>
</dbReference>
<dbReference type="InterPro" id="IPR014729">
    <property type="entry name" value="Rossmann-like_a/b/a_fold"/>
</dbReference>
<dbReference type="NCBIfam" id="TIGR00032">
    <property type="entry name" value="argG"/>
    <property type="match status" value="1"/>
</dbReference>
<dbReference type="NCBIfam" id="NF001770">
    <property type="entry name" value="PRK00509.1"/>
    <property type="match status" value="1"/>
</dbReference>
<dbReference type="NCBIfam" id="NF010392">
    <property type="entry name" value="PRK13820.1"/>
    <property type="match status" value="1"/>
</dbReference>
<dbReference type="PANTHER" id="PTHR11587">
    <property type="entry name" value="ARGININOSUCCINATE SYNTHASE"/>
    <property type="match status" value="1"/>
</dbReference>
<dbReference type="PANTHER" id="PTHR11587:SF2">
    <property type="entry name" value="ARGININOSUCCINATE SYNTHASE"/>
    <property type="match status" value="1"/>
</dbReference>
<dbReference type="Pfam" id="PF20979">
    <property type="entry name" value="Arginosuc_syn_C"/>
    <property type="match status" value="1"/>
</dbReference>
<dbReference type="Pfam" id="PF00764">
    <property type="entry name" value="Arginosuc_synth"/>
    <property type="match status" value="1"/>
</dbReference>
<dbReference type="SUPFAM" id="SSF52402">
    <property type="entry name" value="Adenine nucleotide alpha hydrolases-like"/>
    <property type="match status" value="1"/>
</dbReference>
<dbReference type="SUPFAM" id="SSF69864">
    <property type="entry name" value="Argininosuccinate synthetase, C-terminal domain"/>
    <property type="match status" value="1"/>
</dbReference>
<dbReference type="PROSITE" id="PS00564">
    <property type="entry name" value="ARGININOSUCCIN_SYN_1"/>
    <property type="match status" value="1"/>
</dbReference>
<dbReference type="PROSITE" id="PS00565">
    <property type="entry name" value="ARGININOSUCCIN_SYN_2"/>
    <property type="match status" value="1"/>
</dbReference>
<keyword id="KW-0028">Amino-acid biosynthesis</keyword>
<keyword id="KW-0055">Arginine biosynthesis</keyword>
<keyword id="KW-0067">ATP-binding</keyword>
<keyword id="KW-0963">Cytoplasm</keyword>
<keyword id="KW-0436">Ligase</keyword>
<keyword id="KW-0547">Nucleotide-binding</keyword>
<keyword id="KW-1185">Reference proteome</keyword>
<accession>Q8TWU0</accession>
<proteinExistence type="inferred from homology"/>
<gene>
    <name evidence="1" type="primary">argG</name>
    <name type="ordered locus">MK0942</name>
</gene>
<sequence>MSRVVLAYSGGLDTSVCIELLRERYGYDEVITVTADVGQPEEELREAEEKARKLADEHFTVDCVDEFVCEYCWRAVKANATYEGYPLSTALARPLIAQKVLEVARDVDADAVAHGCTGKGNDQFRFESYLRAHGGEEFEIVAPVRDLNLTRDEEIAYAEERGIPVPVDVDSPYSVDENLWGRSIEGGVLEDPSEEPPEEVFEWTVSPAEAPDEPEVVEIEFEDGVPVEVDGRDDPVEIVRYLNETAGEHGVGRIDIIEDRVIGLKSREVYEAPAAVTLLEAHRALEAFTLTRRELSLKASLEEEWARLVYDGLWFNPLREHLEAFFDSTQRHVEGTVRVKLFKGSATVISRESPRALYEEELISYEEKQFDQRTAEGAVKLHGLQERLALRRRG</sequence>
<feature type="chain" id="PRO_0000148677" description="Argininosuccinate synthase">
    <location>
        <begin position="1"/>
        <end position="394"/>
    </location>
</feature>
<feature type="binding site" evidence="1">
    <location>
        <begin position="7"/>
        <end position="15"/>
    </location>
    <ligand>
        <name>ATP</name>
        <dbReference type="ChEBI" id="CHEBI:30616"/>
    </ligand>
</feature>
<feature type="binding site" evidence="1">
    <location>
        <position position="35"/>
    </location>
    <ligand>
        <name>ATP</name>
        <dbReference type="ChEBI" id="CHEBI:30616"/>
    </ligand>
</feature>
<feature type="binding site" evidence="1">
    <location>
        <position position="85"/>
    </location>
    <ligand>
        <name>L-citrulline</name>
        <dbReference type="ChEBI" id="CHEBI:57743"/>
    </ligand>
</feature>
<feature type="binding site" evidence="1">
    <location>
        <position position="115"/>
    </location>
    <ligand>
        <name>ATP</name>
        <dbReference type="ChEBI" id="CHEBI:30616"/>
    </ligand>
</feature>
<feature type="binding site" evidence="1">
    <location>
        <position position="117"/>
    </location>
    <ligand>
        <name>L-aspartate</name>
        <dbReference type="ChEBI" id="CHEBI:29991"/>
    </ligand>
</feature>
<feature type="binding site" evidence="1">
    <location>
        <position position="121"/>
    </location>
    <ligand>
        <name>L-aspartate</name>
        <dbReference type="ChEBI" id="CHEBI:29991"/>
    </ligand>
</feature>
<feature type="binding site" evidence="1">
    <location>
        <position position="121"/>
    </location>
    <ligand>
        <name>L-citrulline</name>
        <dbReference type="ChEBI" id="CHEBI:57743"/>
    </ligand>
</feature>
<feature type="binding site" evidence="1">
    <location>
        <position position="122"/>
    </location>
    <ligand>
        <name>L-aspartate</name>
        <dbReference type="ChEBI" id="CHEBI:29991"/>
    </ligand>
</feature>
<feature type="binding site" evidence="1">
    <location>
        <position position="125"/>
    </location>
    <ligand>
        <name>L-citrulline</name>
        <dbReference type="ChEBI" id="CHEBI:57743"/>
    </ligand>
</feature>
<feature type="binding site" evidence="1">
    <location>
        <position position="174"/>
    </location>
    <ligand>
        <name>L-citrulline</name>
        <dbReference type="ChEBI" id="CHEBI:57743"/>
    </ligand>
</feature>
<feature type="binding site" evidence="1">
    <location>
        <position position="183"/>
    </location>
    <ligand>
        <name>L-citrulline</name>
        <dbReference type="ChEBI" id="CHEBI:57743"/>
    </ligand>
</feature>
<feature type="binding site" evidence="1">
    <location>
        <position position="258"/>
    </location>
    <ligand>
        <name>L-citrulline</name>
        <dbReference type="ChEBI" id="CHEBI:57743"/>
    </ligand>
</feature>
<feature type="binding site" evidence="1">
    <location>
        <position position="270"/>
    </location>
    <ligand>
        <name>L-citrulline</name>
        <dbReference type="ChEBI" id="CHEBI:57743"/>
    </ligand>
</feature>
<name>ASSY_METKA</name>
<comment type="catalytic activity">
    <reaction evidence="1">
        <text>L-citrulline + L-aspartate + ATP = 2-(N(omega)-L-arginino)succinate + AMP + diphosphate + H(+)</text>
        <dbReference type="Rhea" id="RHEA:10932"/>
        <dbReference type="ChEBI" id="CHEBI:15378"/>
        <dbReference type="ChEBI" id="CHEBI:29991"/>
        <dbReference type="ChEBI" id="CHEBI:30616"/>
        <dbReference type="ChEBI" id="CHEBI:33019"/>
        <dbReference type="ChEBI" id="CHEBI:57472"/>
        <dbReference type="ChEBI" id="CHEBI:57743"/>
        <dbReference type="ChEBI" id="CHEBI:456215"/>
        <dbReference type="EC" id="6.3.4.5"/>
    </reaction>
</comment>
<comment type="pathway">
    <text evidence="1">Amino-acid biosynthesis; L-arginine biosynthesis; L-arginine from L-ornithine and carbamoyl phosphate: step 2/3.</text>
</comment>
<comment type="subunit">
    <text evidence="1">Homotetramer.</text>
</comment>
<comment type="subcellular location">
    <subcellularLocation>
        <location evidence="1">Cytoplasm</location>
    </subcellularLocation>
</comment>
<comment type="similarity">
    <text evidence="1">Belongs to the argininosuccinate synthase family. Type 1 subfamily.</text>
</comment>
<protein>
    <recommendedName>
        <fullName evidence="1">Argininosuccinate synthase</fullName>
        <ecNumber evidence="1">6.3.4.5</ecNumber>
    </recommendedName>
    <alternativeName>
        <fullName evidence="1">Citrulline--aspartate ligase</fullName>
    </alternativeName>
</protein>
<organism>
    <name type="scientific">Methanopyrus kandleri (strain AV19 / DSM 6324 / JCM 9639 / NBRC 100938)</name>
    <dbReference type="NCBI Taxonomy" id="190192"/>
    <lineage>
        <taxon>Archaea</taxon>
        <taxon>Methanobacteriati</taxon>
        <taxon>Methanobacteriota</taxon>
        <taxon>Methanomada group</taxon>
        <taxon>Methanopyri</taxon>
        <taxon>Methanopyrales</taxon>
        <taxon>Methanopyraceae</taxon>
        <taxon>Methanopyrus</taxon>
    </lineage>
</organism>
<reference key="1">
    <citation type="journal article" date="2002" name="Proc. Natl. Acad. Sci. U.S.A.">
        <title>The complete genome of hyperthermophile Methanopyrus kandleri AV19 and monophyly of archaeal methanogens.</title>
        <authorList>
            <person name="Slesarev A.I."/>
            <person name="Mezhevaya K.V."/>
            <person name="Makarova K.S."/>
            <person name="Polushin N.N."/>
            <person name="Shcherbinina O.V."/>
            <person name="Shakhova V.V."/>
            <person name="Belova G.I."/>
            <person name="Aravind L."/>
            <person name="Natale D.A."/>
            <person name="Rogozin I.B."/>
            <person name="Tatusov R.L."/>
            <person name="Wolf Y.I."/>
            <person name="Stetter K.O."/>
            <person name="Malykh A.G."/>
            <person name="Koonin E.V."/>
            <person name="Kozyavkin S.A."/>
        </authorList>
    </citation>
    <scope>NUCLEOTIDE SEQUENCE [LARGE SCALE GENOMIC DNA]</scope>
    <source>
        <strain>AV19 / DSM 6324 / JCM 9639 / NBRC 100938</strain>
    </source>
</reference>